<sequence length="219" mass="22681">MNVDGPFTASCPVVLASGSPRRQEFLRAMGVPFSVDTAGASEPEPVEGEAAVAYARRAACAKTLPVARRHAAACVIGADTVVALDGVIMGKPAGHAHALSMLRALAGARHEVVSACCICLPGNAQEPVVLHAVTSVWMHRWDDAALKAYIATGEPADKAGAYGIQGIGAFLVSRIDGSWSNVVGLPLTELLTELQRRGVVVPSGAQTAEQDGHAPDVRD</sequence>
<keyword id="KW-0963">Cytoplasm</keyword>
<keyword id="KW-0378">Hydrolase</keyword>
<keyword id="KW-0546">Nucleotide metabolism</keyword>
<keyword id="KW-1185">Reference proteome</keyword>
<protein>
    <recommendedName>
        <fullName evidence="1">dTTP/UTP pyrophosphatase</fullName>
        <shortName evidence="1">dTTPase/UTPase</shortName>
        <ecNumber evidence="1">3.6.1.9</ecNumber>
    </recommendedName>
    <alternativeName>
        <fullName evidence="1">Nucleoside triphosphate pyrophosphatase</fullName>
    </alternativeName>
    <alternativeName>
        <fullName evidence="1">Nucleotide pyrophosphatase</fullName>
        <shortName evidence="1">Nucleotide PPase</shortName>
    </alternativeName>
</protein>
<reference key="1">
    <citation type="journal article" date="2011" name="J. Bacteriol.">
        <title>Complete genome sequence and updated annotation of Desulfovibrio alaskensis G20.</title>
        <authorList>
            <person name="Hauser L.J."/>
            <person name="Land M.L."/>
            <person name="Brown S.D."/>
            <person name="Larimer F."/>
            <person name="Keller K.L."/>
            <person name="Rapp-Giles B.J."/>
            <person name="Price M.N."/>
            <person name="Lin M."/>
            <person name="Bruce D.C."/>
            <person name="Detter J.C."/>
            <person name="Tapia R."/>
            <person name="Han C.S."/>
            <person name="Goodwin L.A."/>
            <person name="Cheng J.F."/>
            <person name="Pitluck S."/>
            <person name="Copeland A."/>
            <person name="Lucas S."/>
            <person name="Nolan M."/>
            <person name="Lapidus A.L."/>
            <person name="Palumbo A.V."/>
            <person name="Wall J.D."/>
        </authorList>
    </citation>
    <scope>NUCLEOTIDE SEQUENCE [LARGE SCALE GENOMIC DNA]</scope>
    <source>
        <strain>ATCC BAA-1058 / DSM 17464 / G20</strain>
    </source>
</reference>
<feature type="chain" id="PRO_0000267300" description="dTTP/UTP pyrophosphatase">
    <location>
        <begin position="1"/>
        <end position="219"/>
    </location>
</feature>
<feature type="active site" description="Proton acceptor" evidence="1">
    <location>
        <position position="79"/>
    </location>
</feature>
<feature type="site" description="Important for substrate specificity" evidence="1">
    <location>
        <position position="21"/>
    </location>
</feature>
<feature type="site" description="Important for substrate specificity" evidence="1">
    <location>
        <position position="80"/>
    </location>
</feature>
<feature type="site" description="Important for substrate specificity" evidence="1">
    <location>
        <position position="165"/>
    </location>
</feature>
<dbReference type="EC" id="3.6.1.9" evidence="1"/>
<dbReference type="EMBL" id="CP000112">
    <property type="protein sequence ID" value="ABB37441.1"/>
    <property type="molecule type" value="Genomic_DNA"/>
</dbReference>
<dbReference type="RefSeq" id="WP_011366736.1">
    <property type="nucleotide sequence ID" value="NC_007519.1"/>
</dbReference>
<dbReference type="SMR" id="Q315F5"/>
<dbReference type="STRING" id="207559.Dde_0640"/>
<dbReference type="KEGG" id="dde:Dde_0640"/>
<dbReference type="eggNOG" id="COG0424">
    <property type="taxonomic scope" value="Bacteria"/>
</dbReference>
<dbReference type="HOGENOM" id="CLU_040416_2_1_7"/>
<dbReference type="Proteomes" id="UP000002710">
    <property type="component" value="Chromosome"/>
</dbReference>
<dbReference type="GO" id="GO:0005737">
    <property type="term" value="C:cytoplasm"/>
    <property type="evidence" value="ECO:0007669"/>
    <property type="project" value="UniProtKB-SubCell"/>
</dbReference>
<dbReference type="GO" id="GO:0036218">
    <property type="term" value="F:dTTP diphosphatase activity"/>
    <property type="evidence" value="ECO:0007669"/>
    <property type="project" value="RHEA"/>
</dbReference>
<dbReference type="GO" id="GO:0036221">
    <property type="term" value="F:UTP diphosphatase activity"/>
    <property type="evidence" value="ECO:0007669"/>
    <property type="project" value="RHEA"/>
</dbReference>
<dbReference type="GO" id="GO:0009117">
    <property type="term" value="P:nucleotide metabolic process"/>
    <property type="evidence" value="ECO:0007669"/>
    <property type="project" value="UniProtKB-KW"/>
</dbReference>
<dbReference type="CDD" id="cd00555">
    <property type="entry name" value="Maf"/>
    <property type="match status" value="1"/>
</dbReference>
<dbReference type="Gene3D" id="3.90.950.10">
    <property type="match status" value="1"/>
</dbReference>
<dbReference type="HAMAP" id="MF_00528">
    <property type="entry name" value="Maf"/>
    <property type="match status" value="1"/>
</dbReference>
<dbReference type="InterPro" id="IPR029001">
    <property type="entry name" value="ITPase-like_fam"/>
</dbReference>
<dbReference type="InterPro" id="IPR003697">
    <property type="entry name" value="Maf-like"/>
</dbReference>
<dbReference type="NCBIfam" id="TIGR00172">
    <property type="entry name" value="maf"/>
    <property type="match status" value="1"/>
</dbReference>
<dbReference type="NCBIfam" id="NF010942">
    <property type="entry name" value="PRK14362.1"/>
    <property type="match status" value="1"/>
</dbReference>
<dbReference type="PANTHER" id="PTHR43213">
    <property type="entry name" value="BIFUNCTIONAL DTTP/UTP PYROPHOSPHATASE/METHYLTRANSFERASE PROTEIN-RELATED"/>
    <property type="match status" value="1"/>
</dbReference>
<dbReference type="PANTHER" id="PTHR43213:SF5">
    <property type="entry name" value="BIFUNCTIONAL DTTP_UTP PYROPHOSPHATASE_METHYLTRANSFERASE PROTEIN-RELATED"/>
    <property type="match status" value="1"/>
</dbReference>
<dbReference type="Pfam" id="PF02545">
    <property type="entry name" value="Maf"/>
    <property type="match status" value="1"/>
</dbReference>
<dbReference type="PIRSF" id="PIRSF006305">
    <property type="entry name" value="Maf"/>
    <property type="match status" value="1"/>
</dbReference>
<dbReference type="SUPFAM" id="SSF52972">
    <property type="entry name" value="ITPase-like"/>
    <property type="match status" value="1"/>
</dbReference>
<comment type="function">
    <text evidence="1">Nucleoside triphosphate pyrophosphatase that hydrolyzes dTTP and UTP. May have a dual role in cell division arrest and in preventing the incorporation of modified nucleotides into cellular nucleic acids.</text>
</comment>
<comment type="catalytic activity">
    <reaction evidence="1">
        <text>dTTP + H2O = dTMP + diphosphate + H(+)</text>
        <dbReference type="Rhea" id="RHEA:28534"/>
        <dbReference type="ChEBI" id="CHEBI:15377"/>
        <dbReference type="ChEBI" id="CHEBI:15378"/>
        <dbReference type="ChEBI" id="CHEBI:33019"/>
        <dbReference type="ChEBI" id="CHEBI:37568"/>
        <dbReference type="ChEBI" id="CHEBI:63528"/>
        <dbReference type="EC" id="3.6.1.9"/>
    </reaction>
</comment>
<comment type="catalytic activity">
    <reaction evidence="1">
        <text>UTP + H2O = UMP + diphosphate + H(+)</text>
        <dbReference type="Rhea" id="RHEA:29395"/>
        <dbReference type="ChEBI" id="CHEBI:15377"/>
        <dbReference type="ChEBI" id="CHEBI:15378"/>
        <dbReference type="ChEBI" id="CHEBI:33019"/>
        <dbReference type="ChEBI" id="CHEBI:46398"/>
        <dbReference type="ChEBI" id="CHEBI:57865"/>
        <dbReference type="EC" id="3.6.1.9"/>
    </reaction>
</comment>
<comment type="cofactor">
    <cofactor evidence="1">
        <name>a divalent metal cation</name>
        <dbReference type="ChEBI" id="CHEBI:60240"/>
    </cofactor>
</comment>
<comment type="subcellular location">
    <subcellularLocation>
        <location evidence="1">Cytoplasm</location>
    </subcellularLocation>
</comment>
<comment type="similarity">
    <text evidence="1">Belongs to the Maf family. YhdE subfamily.</text>
</comment>
<organism>
    <name type="scientific">Oleidesulfovibrio alaskensis (strain ATCC BAA-1058 / DSM 17464 / G20)</name>
    <name type="common">Desulfovibrio alaskensis</name>
    <dbReference type="NCBI Taxonomy" id="207559"/>
    <lineage>
        <taxon>Bacteria</taxon>
        <taxon>Pseudomonadati</taxon>
        <taxon>Thermodesulfobacteriota</taxon>
        <taxon>Desulfovibrionia</taxon>
        <taxon>Desulfovibrionales</taxon>
        <taxon>Desulfovibrionaceae</taxon>
        <taxon>Oleidesulfovibrio</taxon>
    </lineage>
</organism>
<evidence type="ECO:0000255" key="1">
    <source>
        <dbReference type="HAMAP-Rule" id="MF_00528"/>
    </source>
</evidence>
<proteinExistence type="inferred from homology"/>
<name>NTPPA_OLEA2</name>
<gene>
    <name type="ordered locus">Dde_0640</name>
</gene>
<accession>Q315F5</accession>